<evidence type="ECO:0000255" key="1">
    <source>
        <dbReference type="HAMAP-Rule" id="MF_00785"/>
    </source>
</evidence>
<evidence type="ECO:0000269" key="2">
    <source>
    </source>
</evidence>
<evidence type="ECO:0000305" key="3"/>
<organism>
    <name type="scientific">Methanothermobacter thermautotrophicus (strain ATCC 29096 / DSM 1053 / JCM 10044 / NBRC 100330 / Delta H)</name>
    <name type="common">Methanobacterium thermoautotrophicum</name>
    <dbReference type="NCBI Taxonomy" id="187420"/>
    <lineage>
        <taxon>Archaea</taxon>
        <taxon>Methanobacteriati</taxon>
        <taxon>Methanobacteriota</taxon>
        <taxon>Methanomada group</taxon>
        <taxon>Methanobacteria</taxon>
        <taxon>Methanobacteriales</taxon>
        <taxon>Methanobacteriaceae</taxon>
        <taxon>Methanothermobacter</taxon>
    </lineage>
</organism>
<comment type="function">
    <text evidence="1 2">Catalyzes the insertion of Co(2+) into sirohydrochlorin as part of the anaerobic pathway to cobalamin biosynthesis (PubMed:12686546). Involved in the biosynthesis of the unique nickel-containing tetrapyrrole coenzyme F430, the prosthetic group of methyl-coenzyme M reductase (MCR), which plays a key role in methanogenesis and anaerobic methane oxidation (Potential). Catalyzes the insertion of Ni(2+) into sirohydrochlorin to yield Ni-sirohydrochlorin (Potential).</text>
</comment>
<comment type="catalytic activity">
    <reaction evidence="1 2">
        <text>Co-sirohydrochlorin + 2 H(+) = sirohydrochlorin + Co(2+)</text>
        <dbReference type="Rhea" id="RHEA:15893"/>
        <dbReference type="ChEBI" id="CHEBI:15378"/>
        <dbReference type="ChEBI" id="CHEBI:48828"/>
        <dbReference type="ChEBI" id="CHEBI:58351"/>
        <dbReference type="ChEBI" id="CHEBI:60049"/>
        <dbReference type="EC" id="4.99.1.3"/>
    </reaction>
</comment>
<comment type="catalytic activity">
    <reaction evidence="1">
        <text>Ni-sirohydrochlorin + 2 H(+) = sirohydrochlorin + Ni(2+)</text>
        <dbReference type="Rhea" id="RHEA:52796"/>
        <dbReference type="ChEBI" id="CHEBI:15378"/>
        <dbReference type="ChEBI" id="CHEBI:49786"/>
        <dbReference type="ChEBI" id="CHEBI:58351"/>
        <dbReference type="ChEBI" id="CHEBI:136841"/>
        <dbReference type="EC" id="4.99.1.11"/>
    </reaction>
</comment>
<comment type="pathway">
    <text evidence="1 2">Cofactor biosynthesis; adenosylcobalamin biosynthesis; cob(II)yrinate a,c-diamide from sirohydrochlorin (anaerobic route): step 1/10.</text>
</comment>
<comment type="subunit">
    <text evidence="1 2">Homotetramer; dimer of dimers.</text>
</comment>
<comment type="similarity">
    <text evidence="1 3">Belongs to the CbiX family. CbiXS subfamily.</text>
</comment>
<comment type="sequence caution" evidence="3">
    <conflict type="erroneous initiation">
        <sequence resource="EMBL-CDS" id="AAB85874"/>
    </conflict>
    <text>Truncated N-terminus.</text>
</comment>
<reference key="1">
    <citation type="journal article" date="1997" name="J. Bacteriol.">
        <title>Complete genome sequence of Methanobacterium thermoautotrophicum deltaH: functional analysis and comparative genomics.</title>
        <authorList>
            <person name="Smith D.R."/>
            <person name="Doucette-Stamm L.A."/>
            <person name="Deloughery C."/>
            <person name="Lee H.-M."/>
            <person name="Dubois J."/>
            <person name="Aldredge T."/>
            <person name="Bashirzadeh R."/>
            <person name="Blakely D."/>
            <person name="Cook R."/>
            <person name="Gilbert K."/>
            <person name="Harrison D."/>
            <person name="Hoang L."/>
            <person name="Keagle P."/>
            <person name="Lumm W."/>
            <person name="Pothier B."/>
            <person name="Qiu D."/>
            <person name="Spadafora R."/>
            <person name="Vicare R."/>
            <person name="Wang Y."/>
            <person name="Wierzbowski J."/>
            <person name="Gibson R."/>
            <person name="Jiwani N."/>
            <person name="Caruso A."/>
            <person name="Bush D."/>
            <person name="Safer H."/>
            <person name="Patwell D."/>
            <person name="Prabhakar S."/>
            <person name="McDougall S."/>
            <person name="Shimer G."/>
            <person name="Goyal A."/>
            <person name="Pietrovski S."/>
            <person name="Church G.M."/>
            <person name="Daniels C.J."/>
            <person name="Mao J.-I."/>
            <person name="Rice P."/>
            <person name="Noelling J."/>
            <person name="Reeve J.N."/>
        </authorList>
    </citation>
    <scope>NUCLEOTIDE SEQUENCE [LARGE SCALE GENOMIC DNA]</scope>
    <source>
        <strain>ATCC 29096 / DSM 1053 / JCM 10044 / NBRC 100330 / Delta H</strain>
    </source>
</reference>
<reference key="2">
    <citation type="journal article" date="2003" name="J. Biol. Chem.">
        <title>A story of chelatase evolution: identification and characterization of a small 13-15-kDa 'ancestral' cobaltochelatase (CbiXS) in the archaea.</title>
        <authorList>
            <person name="Brindley A.A."/>
            <person name="Raux E."/>
            <person name="Leech H.K."/>
            <person name="Schubert H.L."/>
            <person name="Warren M.J."/>
        </authorList>
    </citation>
    <scope>FUNCTION</scope>
    <scope>CATALYTIC ACTIVITY</scope>
    <scope>PATHWAY</scope>
    <scope>SUBUNIT</scope>
</reference>
<keyword id="KW-0169">Cobalamin biosynthesis</keyword>
<keyword id="KW-0170">Cobalt</keyword>
<keyword id="KW-0456">Lyase</keyword>
<keyword id="KW-0479">Metal-binding</keyword>
<keyword id="KW-0484">Methanogenesis</keyword>
<keyword id="KW-0533">Nickel</keyword>
<keyword id="KW-1185">Reference proteome</keyword>
<accession>O27448</accession>
<feature type="chain" id="PRO_0000150360" description="Sirohydrochlorin cobaltochelatase">
    <location>
        <begin position="1"/>
        <end position="143"/>
    </location>
</feature>
<feature type="active site" description="Proton acceptor" evidence="1">
    <location>
        <position position="18"/>
    </location>
</feature>
<feature type="binding site" evidence="1">
    <location>
        <position position="18"/>
    </location>
    <ligand>
        <name>Co(2+)</name>
        <dbReference type="ChEBI" id="CHEBI:48828"/>
    </ligand>
</feature>
<feature type="binding site" evidence="1">
    <location>
        <position position="18"/>
    </location>
    <ligand>
        <name>Ni(2+)</name>
        <dbReference type="ChEBI" id="CHEBI:49786"/>
    </ligand>
</feature>
<feature type="binding site" evidence="1">
    <location>
        <position position="53"/>
    </location>
    <ligand>
        <name>substrate</name>
    </ligand>
</feature>
<feature type="binding site" evidence="1">
    <location>
        <begin position="78"/>
        <end position="83"/>
    </location>
    <ligand>
        <name>substrate</name>
    </ligand>
</feature>
<feature type="binding site" evidence="1">
    <location>
        <position position="83"/>
    </location>
    <ligand>
        <name>Co(2+)</name>
        <dbReference type="ChEBI" id="CHEBI:48828"/>
    </ligand>
</feature>
<feature type="binding site" evidence="1">
    <location>
        <position position="83"/>
    </location>
    <ligand>
        <name>Ni(2+)</name>
        <dbReference type="ChEBI" id="CHEBI:49786"/>
    </ligand>
</feature>
<proteinExistence type="evidence at protein level"/>
<gene>
    <name evidence="1" type="primary">cbiX</name>
    <name evidence="1" type="synonym">cfbA</name>
    <name type="ordered locus">MTH_1397</name>
</gene>
<name>CFBA_METTH</name>
<dbReference type="EC" id="4.99.1.3" evidence="1"/>
<dbReference type="EC" id="4.99.1.11" evidence="1"/>
<dbReference type="EMBL" id="AE000666">
    <property type="protein sequence ID" value="AAB85874.1"/>
    <property type="status" value="ALT_INIT"/>
    <property type="molecule type" value="Genomic_DNA"/>
</dbReference>
<dbReference type="PIR" id="H69052">
    <property type="entry name" value="H69052"/>
</dbReference>
<dbReference type="RefSeq" id="WP_048061042.1">
    <property type="nucleotide sequence ID" value="NC_000916.1"/>
</dbReference>
<dbReference type="SMR" id="O27448"/>
<dbReference type="FunCoup" id="O27448">
    <property type="interactions" value="90"/>
</dbReference>
<dbReference type="STRING" id="187420.MTH_1397"/>
<dbReference type="PaxDb" id="187420-MTH_1397"/>
<dbReference type="EnsemblBacteria" id="AAB85874">
    <property type="protein sequence ID" value="AAB85874"/>
    <property type="gene ID" value="MTH_1397"/>
</dbReference>
<dbReference type="GeneID" id="82297834"/>
<dbReference type="KEGG" id="mth:MTH_1397"/>
<dbReference type="PATRIC" id="fig|187420.15.peg.1362"/>
<dbReference type="HOGENOM" id="CLU_065901_2_1_2"/>
<dbReference type="InParanoid" id="O27448"/>
<dbReference type="UniPathway" id="UPA00148">
    <property type="reaction ID" value="UER00223"/>
</dbReference>
<dbReference type="Proteomes" id="UP000005223">
    <property type="component" value="Chromosome"/>
</dbReference>
<dbReference type="GO" id="GO:0050897">
    <property type="term" value="F:cobalt ion binding"/>
    <property type="evidence" value="ECO:0007669"/>
    <property type="project" value="UniProtKB-UniRule"/>
</dbReference>
<dbReference type="GO" id="GO:0016151">
    <property type="term" value="F:nickel cation binding"/>
    <property type="evidence" value="ECO:0007669"/>
    <property type="project" value="UniProtKB-UniRule"/>
</dbReference>
<dbReference type="GO" id="GO:0016852">
    <property type="term" value="F:sirohydrochlorin cobaltochelatase activity"/>
    <property type="evidence" value="ECO:0007669"/>
    <property type="project" value="UniProtKB-UniRule"/>
</dbReference>
<dbReference type="GO" id="GO:0019251">
    <property type="term" value="P:anaerobic cobalamin biosynthetic process"/>
    <property type="evidence" value="ECO:0007669"/>
    <property type="project" value="UniProtKB-UniRule"/>
</dbReference>
<dbReference type="GO" id="GO:0015948">
    <property type="term" value="P:methanogenesis"/>
    <property type="evidence" value="ECO:0007669"/>
    <property type="project" value="UniProtKB-KW"/>
</dbReference>
<dbReference type="CDD" id="cd03416">
    <property type="entry name" value="CbiX_SirB_N"/>
    <property type="match status" value="1"/>
</dbReference>
<dbReference type="Gene3D" id="3.40.50.1400">
    <property type="match status" value="1"/>
</dbReference>
<dbReference type="HAMAP" id="MF_00785">
    <property type="entry name" value="CbiX"/>
    <property type="match status" value="1"/>
</dbReference>
<dbReference type="InterPro" id="IPR002762">
    <property type="entry name" value="CbiX-like"/>
</dbReference>
<dbReference type="InterPro" id="IPR023652">
    <property type="entry name" value="SiroHydchlorin_Cochelatase"/>
</dbReference>
<dbReference type="InterPro" id="IPR050963">
    <property type="entry name" value="Sirohydro_Cobaltochel/CbiX"/>
</dbReference>
<dbReference type="NCBIfam" id="NF033198">
    <property type="entry name" value="F430_CfbA"/>
    <property type="match status" value="1"/>
</dbReference>
<dbReference type="NCBIfam" id="NF002090">
    <property type="entry name" value="PRK00923.1"/>
    <property type="match status" value="1"/>
</dbReference>
<dbReference type="PANTHER" id="PTHR33542">
    <property type="entry name" value="SIROHYDROCHLORIN FERROCHELATASE, CHLOROPLASTIC"/>
    <property type="match status" value="1"/>
</dbReference>
<dbReference type="PANTHER" id="PTHR33542:SF3">
    <property type="entry name" value="SIROHYDROCHLORIN FERROCHELATASE, CHLOROPLASTIC"/>
    <property type="match status" value="1"/>
</dbReference>
<dbReference type="Pfam" id="PF01903">
    <property type="entry name" value="CbiX"/>
    <property type="match status" value="1"/>
</dbReference>
<dbReference type="SUPFAM" id="SSF53800">
    <property type="entry name" value="Chelatase"/>
    <property type="match status" value="1"/>
</dbReference>
<protein>
    <recommendedName>
        <fullName evidence="1">Sirohydrochlorin cobaltochelatase</fullName>
        <ecNumber evidence="1">4.99.1.3</ecNumber>
    </recommendedName>
    <alternativeName>
        <fullName evidence="1">CbiXS</fullName>
    </alternativeName>
    <alternativeName>
        <fullName evidence="1">Sirohydrochlorin nickelchelatase</fullName>
        <ecNumber evidence="1">4.99.1.11</ecNumber>
    </alternativeName>
</protein>
<sequence>MDSNSNQKPKIGVLLVGHGSRLPYGEEVINGIADIYRQEADHPVAVGFMNMSRPSIPEAINELAAMGVEKIIVTPVFLAHGVHTKHDIPHILGLDNGAEGHHHHEHEHEHEEFEFDGEIVYTEPLGADPRIAEIIRDRVKSAI</sequence>